<protein>
    <recommendedName>
        <fullName evidence="1">Ketol-acid reductoisomerase (NADP(+))</fullName>
        <shortName evidence="1">KARI</shortName>
        <ecNumber evidence="1">1.1.1.86</ecNumber>
    </recommendedName>
    <alternativeName>
        <fullName evidence="1">Acetohydroxy-acid isomeroreductase</fullName>
        <shortName evidence="1">AHIR</shortName>
    </alternativeName>
    <alternativeName>
        <fullName evidence="1">Alpha-keto-beta-hydroxylacyl reductoisomerase</fullName>
    </alternativeName>
    <alternativeName>
        <fullName evidence="1">Ketol-acid reductoisomerase type 1</fullName>
    </alternativeName>
    <alternativeName>
        <fullName evidence="1">Ketol-acid reductoisomerase type I</fullName>
    </alternativeName>
</protein>
<dbReference type="EC" id="1.1.1.86" evidence="1"/>
<dbReference type="EMBL" id="CP001096">
    <property type="protein sequence ID" value="ACF00767.1"/>
    <property type="molecule type" value="Genomic_DNA"/>
</dbReference>
<dbReference type="RefSeq" id="WP_011157590.1">
    <property type="nucleotide sequence ID" value="NC_011004.1"/>
</dbReference>
<dbReference type="SMR" id="B3QCW2"/>
<dbReference type="GeneID" id="66893079"/>
<dbReference type="KEGG" id="rpt:Rpal_2246"/>
<dbReference type="HOGENOM" id="CLU_033821_0_1_5"/>
<dbReference type="OrthoDB" id="9804088at2"/>
<dbReference type="UniPathway" id="UPA00047">
    <property type="reaction ID" value="UER00056"/>
</dbReference>
<dbReference type="UniPathway" id="UPA00049">
    <property type="reaction ID" value="UER00060"/>
</dbReference>
<dbReference type="Proteomes" id="UP000001725">
    <property type="component" value="Chromosome"/>
</dbReference>
<dbReference type="GO" id="GO:0005829">
    <property type="term" value="C:cytosol"/>
    <property type="evidence" value="ECO:0007669"/>
    <property type="project" value="TreeGrafter"/>
</dbReference>
<dbReference type="GO" id="GO:0004455">
    <property type="term" value="F:ketol-acid reductoisomerase activity"/>
    <property type="evidence" value="ECO:0007669"/>
    <property type="project" value="UniProtKB-UniRule"/>
</dbReference>
<dbReference type="GO" id="GO:0000287">
    <property type="term" value="F:magnesium ion binding"/>
    <property type="evidence" value="ECO:0007669"/>
    <property type="project" value="UniProtKB-UniRule"/>
</dbReference>
<dbReference type="GO" id="GO:0050661">
    <property type="term" value="F:NADP binding"/>
    <property type="evidence" value="ECO:0007669"/>
    <property type="project" value="InterPro"/>
</dbReference>
<dbReference type="GO" id="GO:0009097">
    <property type="term" value="P:isoleucine biosynthetic process"/>
    <property type="evidence" value="ECO:0007669"/>
    <property type="project" value="UniProtKB-UniRule"/>
</dbReference>
<dbReference type="GO" id="GO:0009099">
    <property type="term" value="P:L-valine biosynthetic process"/>
    <property type="evidence" value="ECO:0007669"/>
    <property type="project" value="UniProtKB-UniRule"/>
</dbReference>
<dbReference type="FunFam" id="3.40.50.720:FF:000023">
    <property type="entry name" value="Ketol-acid reductoisomerase (NADP(+))"/>
    <property type="match status" value="1"/>
</dbReference>
<dbReference type="Gene3D" id="6.10.240.10">
    <property type="match status" value="1"/>
</dbReference>
<dbReference type="Gene3D" id="3.40.50.720">
    <property type="entry name" value="NAD(P)-binding Rossmann-like Domain"/>
    <property type="match status" value="1"/>
</dbReference>
<dbReference type="HAMAP" id="MF_00435">
    <property type="entry name" value="IlvC"/>
    <property type="match status" value="1"/>
</dbReference>
<dbReference type="InterPro" id="IPR008927">
    <property type="entry name" value="6-PGluconate_DH-like_C_sf"/>
</dbReference>
<dbReference type="InterPro" id="IPR013023">
    <property type="entry name" value="KARI"/>
</dbReference>
<dbReference type="InterPro" id="IPR000506">
    <property type="entry name" value="KARI_C"/>
</dbReference>
<dbReference type="InterPro" id="IPR013116">
    <property type="entry name" value="KARI_N"/>
</dbReference>
<dbReference type="InterPro" id="IPR014359">
    <property type="entry name" value="KARI_prok"/>
</dbReference>
<dbReference type="InterPro" id="IPR036291">
    <property type="entry name" value="NAD(P)-bd_dom_sf"/>
</dbReference>
<dbReference type="NCBIfam" id="TIGR00465">
    <property type="entry name" value="ilvC"/>
    <property type="match status" value="1"/>
</dbReference>
<dbReference type="NCBIfam" id="NF004017">
    <property type="entry name" value="PRK05479.1"/>
    <property type="match status" value="1"/>
</dbReference>
<dbReference type="NCBIfam" id="NF009940">
    <property type="entry name" value="PRK13403.1"/>
    <property type="match status" value="1"/>
</dbReference>
<dbReference type="PANTHER" id="PTHR21371">
    <property type="entry name" value="KETOL-ACID REDUCTOISOMERASE, MITOCHONDRIAL"/>
    <property type="match status" value="1"/>
</dbReference>
<dbReference type="PANTHER" id="PTHR21371:SF1">
    <property type="entry name" value="KETOL-ACID REDUCTOISOMERASE, MITOCHONDRIAL"/>
    <property type="match status" value="1"/>
</dbReference>
<dbReference type="Pfam" id="PF01450">
    <property type="entry name" value="KARI_C"/>
    <property type="match status" value="1"/>
</dbReference>
<dbReference type="Pfam" id="PF07991">
    <property type="entry name" value="KARI_N"/>
    <property type="match status" value="1"/>
</dbReference>
<dbReference type="PIRSF" id="PIRSF000116">
    <property type="entry name" value="IlvC_gammaproteo"/>
    <property type="match status" value="1"/>
</dbReference>
<dbReference type="SUPFAM" id="SSF48179">
    <property type="entry name" value="6-phosphogluconate dehydrogenase C-terminal domain-like"/>
    <property type="match status" value="1"/>
</dbReference>
<dbReference type="SUPFAM" id="SSF51735">
    <property type="entry name" value="NAD(P)-binding Rossmann-fold domains"/>
    <property type="match status" value="1"/>
</dbReference>
<dbReference type="PROSITE" id="PS51851">
    <property type="entry name" value="KARI_C"/>
    <property type="match status" value="1"/>
</dbReference>
<dbReference type="PROSITE" id="PS51850">
    <property type="entry name" value="KARI_N"/>
    <property type="match status" value="1"/>
</dbReference>
<name>ILVC_RHOPT</name>
<reference key="1">
    <citation type="submission" date="2008-05" db="EMBL/GenBank/DDBJ databases">
        <title>Complete sequence of Rhodopseudomonas palustris TIE-1.</title>
        <authorList>
            <consortium name="US DOE Joint Genome Institute"/>
            <person name="Lucas S."/>
            <person name="Copeland A."/>
            <person name="Lapidus A."/>
            <person name="Glavina del Rio T."/>
            <person name="Dalin E."/>
            <person name="Tice H."/>
            <person name="Pitluck S."/>
            <person name="Chain P."/>
            <person name="Malfatti S."/>
            <person name="Shin M."/>
            <person name="Vergez L."/>
            <person name="Lang D."/>
            <person name="Schmutz J."/>
            <person name="Larimer F."/>
            <person name="Land M."/>
            <person name="Hauser L."/>
            <person name="Kyrpides N."/>
            <person name="Mikhailova N."/>
            <person name="Emerson D."/>
            <person name="Newman D.K."/>
            <person name="Roden E."/>
            <person name="Richardson P."/>
        </authorList>
    </citation>
    <scope>NUCLEOTIDE SEQUENCE [LARGE SCALE GENOMIC DNA]</scope>
    <source>
        <strain>TIE-1</strain>
    </source>
</reference>
<comment type="function">
    <text evidence="1">Involved in the biosynthesis of branched-chain amino acids (BCAA). Catalyzes an alkyl-migration followed by a ketol-acid reduction of (S)-2-acetolactate (S2AL) to yield (R)-2,3-dihydroxy-isovalerate. In the isomerase reaction, S2AL is rearranged via a Mg-dependent methyl migration to produce 3-hydroxy-3-methyl-2-ketobutyrate (HMKB). In the reductase reaction, this 2-ketoacid undergoes a metal-dependent reduction by NADPH to yield (R)-2,3-dihydroxy-isovalerate.</text>
</comment>
<comment type="catalytic activity">
    <reaction evidence="1">
        <text>(2R)-2,3-dihydroxy-3-methylbutanoate + NADP(+) = (2S)-2-acetolactate + NADPH + H(+)</text>
        <dbReference type="Rhea" id="RHEA:22068"/>
        <dbReference type="ChEBI" id="CHEBI:15378"/>
        <dbReference type="ChEBI" id="CHEBI:49072"/>
        <dbReference type="ChEBI" id="CHEBI:57783"/>
        <dbReference type="ChEBI" id="CHEBI:58349"/>
        <dbReference type="ChEBI" id="CHEBI:58476"/>
        <dbReference type="EC" id="1.1.1.86"/>
    </reaction>
</comment>
<comment type="catalytic activity">
    <reaction evidence="1">
        <text>(2R,3R)-2,3-dihydroxy-3-methylpentanoate + NADP(+) = (S)-2-ethyl-2-hydroxy-3-oxobutanoate + NADPH + H(+)</text>
        <dbReference type="Rhea" id="RHEA:13493"/>
        <dbReference type="ChEBI" id="CHEBI:15378"/>
        <dbReference type="ChEBI" id="CHEBI:49256"/>
        <dbReference type="ChEBI" id="CHEBI:49258"/>
        <dbReference type="ChEBI" id="CHEBI:57783"/>
        <dbReference type="ChEBI" id="CHEBI:58349"/>
        <dbReference type="EC" id="1.1.1.86"/>
    </reaction>
</comment>
<comment type="cofactor">
    <cofactor evidence="1">
        <name>Mg(2+)</name>
        <dbReference type="ChEBI" id="CHEBI:18420"/>
    </cofactor>
    <text evidence="1">Binds 2 magnesium ions per subunit.</text>
</comment>
<comment type="pathway">
    <text evidence="1">Amino-acid biosynthesis; L-isoleucine biosynthesis; L-isoleucine from 2-oxobutanoate: step 2/4.</text>
</comment>
<comment type="pathway">
    <text evidence="1">Amino-acid biosynthesis; L-valine biosynthesis; L-valine from pyruvate: step 2/4.</text>
</comment>
<comment type="similarity">
    <text evidence="1">Belongs to the ketol-acid reductoisomerase family.</text>
</comment>
<accession>B3QCW2</accession>
<feature type="chain" id="PRO_1000190983" description="Ketol-acid reductoisomerase (NADP(+))">
    <location>
        <begin position="1"/>
        <end position="339"/>
    </location>
</feature>
<feature type="domain" description="KARI N-terminal Rossmann" evidence="2">
    <location>
        <begin position="1"/>
        <end position="182"/>
    </location>
</feature>
<feature type="domain" description="KARI C-terminal knotted" evidence="3">
    <location>
        <begin position="183"/>
        <end position="328"/>
    </location>
</feature>
<feature type="active site" evidence="1">
    <location>
        <position position="108"/>
    </location>
</feature>
<feature type="binding site" evidence="1">
    <location>
        <begin position="24"/>
        <end position="27"/>
    </location>
    <ligand>
        <name>NADP(+)</name>
        <dbReference type="ChEBI" id="CHEBI:58349"/>
    </ligand>
</feature>
<feature type="binding site" evidence="1">
    <location>
        <position position="48"/>
    </location>
    <ligand>
        <name>NADP(+)</name>
        <dbReference type="ChEBI" id="CHEBI:58349"/>
    </ligand>
</feature>
<feature type="binding site" evidence="1">
    <location>
        <position position="51"/>
    </location>
    <ligand>
        <name>NADP(+)</name>
        <dbReference type="ChEBI" id="CHEBI:58349"/>
    </ligand>
</feature>
<feature type="binding site" evidence="1">
    <location>
        <position position="53"/>
    </location>
    <ligand>
        <name>NADP(+)</name>
        <dbReference type="ChEBI" id="CHEBI:58349"/>
    </ligand>
</feature>
<feature type="binding site" evidence="1">
    <location>
        <begin position="83"/>
        <end position="86"/>
    </location>
    <ligand>
        <name>NADP(+)</name>
        <dbReference type="ChEBI" id="CHEBI:58349"/>
    </ligand>
</feature>
<feature type="binding site" evidence="1">
    <location>
        <position position="134"/>
    </location>
    <ligand>
        <name>NADP(+)</name>
        <dbReference type="ChEBI" id="CHEBI:58349"/>
    </ligand>
</feature>
<feature type="binding site" evidence="1">
    <location>
        <position position="191"/>
    </location>
    <ligand>
        <name>Mg(2+)</name>
        <dbReference type="ChEBI" id="CHEBI:18420"/>
        <label>1</label>
    </ligand>
</feature>
<feature type="binding site" evidence="1">
    <location>
        <position position="191"/>
    </location>
    <ligand>
        <name>Mg(2+)</name>
        <dbReference type="ChEBI" id="CHEBI:18420"/>
        <label>2</label>
    </ligand>
</feature>
<feature type="binding site" evidence="1">
    <location>
        <position position="195"/>
    </location>
    <ligand>
        <name>Mg(2+)</name>
        <dbReference type="ChEBI" id="CHEBI:18420"/>
        <label>1</label>
    </ligand>
</feature>
<feature type="binding site" evidence="1">
    <location>
        <position position="227"/>
    </location>
    <ligand>
        <name>Mg(2+)</name>
        <dbReference type="ChEBI" id="CHEBI:18420"/>
        <label>2</label>
    </ligand>
</feature>
<feature type="binding site" evidence="1">
    <location>
        <position position="231"/>
    </location>
    <ligand>
        <name>Mg(2+)</name>
        <dbReference type="ChEBI" id="CHEBI:18420"/>
        <label>2</label>
    </ligand>
</feature>
<feature type="binding site" evidence="1">
    <location>
        <position position="252"/>
    </location>
    <ligand>
        <name>substrate</name>
    </ligand>
</feature>
<keyword id="KW-0028">Amino-acid biosynthesis</keyword>
<keyword id="KW-0100">Branched-chain amino acid biosynthesis</keyword>
<keyword id="KW-0460">Magnesium</keyword>
<keyword id="KW-0479">Metal-binding</keyword>
<keyword id="KW-0521">NADP</keyword>
<keyword id="KW-0560">Oxidoreductase</keyword>
<evidence type="ECO:0000255" key="1">
    <source>
        <dbReference type="HAMAP-Rule" id="MF_00435"/>
    </source>
</evidence>
<evidence type="ECO:0000255" key="2">
    <source>
        <dbReference type="PROSITE-ProRule" id="PRU01197"/>
    </source>
</evidence>
<evidence type="ECO:0000255" key="3">
    <source>
        <dbReference type="PROSITE-ProRule" id="PRU01198"/>
    </source>
</evidence>
<gene>
    <name evidence="1" type="primary">ilvC</name>
    <name type="ordered locus">Rpal_2246</name>
</gene>
<proteinExistence type="inferred from homology"/>
<sequence>MRVYYDRDADLNLIKGKKVAVIGYGSQGHAHALNLKDSGVKDVAIALRKGSASAKKAENAGFKVMEVAEAAKWADVMMMLTPDELQADIYREHLHDNMKQGAALLFAHGLNVHFNLIEPRADLDVLMVAPKGPGHTVRSEYQRGGGVPCLIAIHKDASGNAHDLGLSYASAIGGGRAGIIETTFREECETDLFGEQVVLCGGLVELIKAGFETLVEAGYAPEMAYFECLHEVKLIVDLIYEGGIANMNYSISNTAEYGEYVTGPRIVTPETKAEMKRVLADIQNGIFTRNWMLENKVNQTSFKATRAKLAQHPIEEVGAKLRDMMPWIKKGALVDKSKN</sequence>
<organism>
    <name type="scientific">Rhodopseudomonas palustris (strain TIE-1)</name>
    <dbReference type="NCBI Taxonomy" id="395960"/>
    <lineage>
        <taxon>Bacteria</taxon>
        <taxon>Pseudomonadati</taxon>
        <taxon>Pseudomonadota</taxon>
        <taxon>Alphaproteobacteria</taxon>
        <taxon>Hyphomicrobiales</taxon>
        <taxon>Nitrobacteraceae</taxon>
        <taxon>Rhodopseudomonas</taxon>
    </lineage>
</organism>